<reference key="1">
    <citation type="submission" date="2004-06" db="EMBL/GenBank/DDBJ databases">
        <authorList>
            <consortium name="NIH - Xenopus Gene Collection (XGC) project"/>
        </authorList>
    </citation>
    <scope>NUCLEOTIDE SEQUENCE [LARGE SCALE MRNA]</scope>
    <source>
        <tissue>Embryo</tissue>
    </source>
</reference>
<evidence type="ECO:0000250" key="1"/>
<evidence type="ECO:0000305" key="2"/>
<accession>Q6IP91</accession>
<gene>
    <name type="primary">ppp4c</name>
</gene>
<keyword id="KW-0963">Cytoplasm</keyword>
<keyword id="KW-0206">Cytoskeleton</keyword>
<keyword id="KW-0378">Hydrolase</keyword>
<keyword id="KW-0464">Manganese</keyword>
<keyword id="KW-0479">Metal-binding</keyword>
<keyword id="KW-0488">Methylation</keyword>
<keyword id="KW-0539">Nucleus</keyword>
<keyword id="KW-0904">Protein phosphatase</keyword>
<keyword id="KW-1185">Reference proteome</keyword>
<comment type="function">
    <text evidence="1">Protein phosphatase that regulates many processes such as microtubule organization at centrosomes.</text>
</comment>
<comment type="catalytic activity">
    <reaction>
        <text>O-phospho-L-seryl-[protein] + H2O = L-seryl-[protein] + phosphate</text>
        <dbReference type="Rhea" id="RHEA:20629"/>
        <dbReference type="Rhea" id="RHEA-COMP:9863"/>
        <dbReference type="Rhea" id="RHEA-COMP:11604"/>
        <dbReference type="ChEBI" id="CHEBI:15377"/>
        <dbReference type="ChEBI" id="CHEBI:29999"/>
        <dbReference type="ChEBI" id="CHEBI:43474"/>
        <dbReference type="ChEBI" id="CHEBI:83421"/>
        <dbReference type="EC" id="3.1.3.16"/>
    </reaction>
</comment>
<comment type="catalytic activity">
    <reaction>
        <text>O-phospho-L-threonyl-[protein] + H2O = L-threonyl-[protein] + phosphate</text>
        <dbReference type="Rhea" id="RHEA:47004"/>
        <dbReference type="Rhea" id="RHEA-COMP:11060"/>
        <dbReference type="Rhea" id="RHEA-COMP:11605"/>
        <dbReference type="ChEBI" id="CHEBI:15377"/>
        <dbReference type="ChEBI" id="CHEBI:30013"/>
        <dbReference type="ChEBI" id="CHEBI:43474"/>
        <dbReference type="ChEBI" id="CHEBI:61977"/>
        <dbReference type="EC" id="3.1.3.16"/>
    </reaction>
</comment>
<comment type="cofactor">
    <cofactor evidence="1">
        <name>Mn(2+)</name>
        <dbReference type="ChEBI" id="CHEBI:29035"/>
    </cofactor>
    <text evidence="1">Binds 2 manganese ions per subunit.</text>
</comment>
<comment type="subunit">
    <text evidence="1">Serine/threonine-protein phosphatase 4 (PP4) occurs in different assemblies of the catalytic and one or more regulatory subunits.</text>
</comment>
<comment type="subcellular location">
    <subcellularLocation>
        <location evidence="1">Cytoplasm</location>
    </subcellularLocation>
    <subcellularLocation>
        <location evidence="1">Nucleus</location>
    </subcellularLocation>
    <subcellularLocation>
        <location evidence="1">Cytoplasm</location>
        <location evidence="1">Cytoskeleton</location>
        <location evidence="1">Microtubule organizing center</location>
        <location evidence="1">Centrosome</location>
    </subcellularLocation>
</comment>
<comment type="similarity">
    <text evidence="2">Belongs to the PPP phosphatase family. PP-4 (PP-X) subfamily.</text>
</comment>
<dbReference type="EC" id="3.1.3.16"/>
<dbReference type="EMBL" id="BC072026">
    <property type="protein sequence ID" value="AAH72026.1"/>
    <property type="molecule type" value="mRNA"/>
</dbReference>
<dbReference type="RefSeq" id="NP_001085238.1">
    <property type="nucleotide sequence ID" value="NM_001091769.1"/>
</dbReference>
<dbReference type="SMR" id="Q6IP91"/>
<dbReference type="BioGRID" id="101700">
    <property type="interactions" value="1"/>
</dbReference>
<dbReference type="IntAct" id="Q6IP91">
    <property type="interactions" value="1"/>
</dbReference>
<dbReference type="DNASU" id="432334"/>
<dbReference type="GeneID" id="432334"/>
<dbReference type="KEGG" id="xla:108703929"/>
<dbReference type="KEGG" id="xla:432334"/>
<dbReference type="AGR" id="Xenbase:XB-GENE-6078278"/>
<dbReference type="CTD" id="108703929"/>
<dbReference type="CTD" id="432334"/>
<dbReference type="Xenbase" id="XB-GENE-6078278">
    <property type="gene designation" value="ppp4c.S"/>
</dbReference>
<dbReference type="OrthoDB" id="1930084at2759"/>
<dbReference type="Proteomes" id="UP000186698">
    <property type="component" value="Chromosome 9_10L"/>
</dbReference>
<dbReference type="Proteomes" id="UP000186698">
    <property type="component" value="Chromosome 9_10S"/>
</dbReference>
<dbReference type="Bgee" id="108703929">
    <property type="expression patterns" value="Expressed in blastula and 19 other cell types or tissues"/>
</dbReference>
<dbReference type="GO" id="GO:0005813">
    <property type="term" value="C:centrosome"/>
    <property type="evidence" value="ECO:0007669"/>
    <property type="project" value="UniProtKB-SubCell"/>
</dbReference>
<dbReference type="GO" id="GO:0005737">
    <property type="term" value="C:cytoplasm"/>
    <property type="evidence" value="ECO:0000318"/>
    <property type="project" value="GO_Central"/>
</dbReference>
<dbReference type="GO" id="GO:0005634">
    <property type="term" value="C:nucleus"/>
    <property type="evidence" value="ECO:0000318"/>
    <property type="project" value="GO_Central"/>
</dbReference>
<dbReference type="GO" id="GO:0046872">
    <property type="term" value="F:metal ion binding"/>
    <property type="evidence" value="ECO:0007669"/>
    <property type="project" value="UniProtKB-KW"/>
</dbReference>
<dbReference type="GO" id="GO:0004722">
    <property type="term" value="F:protein serine/threonine phosphatase activity"/>
    <property type="evidence" value="ECO:0000318"/>
    <property type="project" value="GO_Central"/>
</dbReference>
<dbReference type="GO" id="GO:0000724">
    <property type="term" value="P:double-strand break repair via homologous recombination"/>
    <property type="evidence" value="ECO:0000318"/>
    <property type="project" value="GO_Central"/>
</dbReference>
<dbReference type="CDD" id="cd07415">
    <property type="entry name" value="MPP_PP2A_PP4_PP6"/>
    <property type="match status" value="1"/>
</dbReference>
<dbReference type="FunFam" id="3.60.21.10:FF:000010">
    <property type="entry name" value="Serine/threonine-protein phosphatase"/>
    <property type="match status" value="1"/>
</dbReference>
<dbReference type="Gene3D" id="3.60.21.10">
    <property type="match status" value="1"/>
</dbReference>
<dbReference type="InterPro" id="IPR004843">
    <property type="entry name" value="Calcineurin-like_PHP_ApaH"/>
</dbReference>
<dbReference type="InterPro" id="IPR029052">
    <property type="entry name" value="Metallo-depent_PP-like"/>
</dbReference>
<dbReference type="InterPro" id="IPR047129">
    <property type="entry name" value="PPA2-like"/>
</dbReference>
<dbReference type="InterPro" id="IPR006186">
    <property type="entry name" value="Ser/Thr-sp_prot-phosphatase"/>
</dbReference>
<dbReference type="PANTHER" id="PTHR45619">
    <property type="entry name" value="SERINE/THREONINE-PROTEIN PHOSPHATASE PP2A-RELATED"/>
    <property type="match status" value="1"/>
</dbReference>
<dbReference type="Pfam" id="PF00149">
    <property type="entry name" value="Metallophos"/>
    <property type="match status" value="1"/>
</dbReference>
<dbReference type="PRINTS" id="PR00114">
    <property type="entry name" value="STPHPHTASE"/>
</dbReference>
<dbReference type="SMART" id="SM00156">
    <property type="entry name" value="PP2Ac"/>
    <property type="match status" value="1"/>
</dbReference>
<dbReference type="SUPFAM" id="SSF56300">
    <property type="entry name" value="Metallo-dependent phosphatases"/>
    <property type="match status" value="1"/>
</dbReference>
<dbReference type="PROSITE" id="PS00125">
    <property type="entry name" value="SER_THR_PHOSPHATASE"/>
    <property type="match status" value="1"/>
</dbReference>
<organism>
    <name type="scientific">Xenopus laevis</name>
    <name type="common">African clawed frog</name>
    <dbReference type="NCBI Taxonomy" id="8355"/>
    <lineage>
        <taxon>Eukaryota</taxon>
        <taxon>Metazoa</taxon>
        <taxon>Chordata</taxon>
        <taxon>Craniata</taxon>
        <taxon>Vertebrata</taxon>
        <taxon>Euteleostomi</taxon>
        <taxon>Amphibia</taxon>
        <taxon>Batrachia</taxon>
        <taxon>Anura</taxon>
        <taxon>Pipoidea</taxon>
        <taxon>Pipidae</taxon>
        <taxon>Xenopodinae</taxon>
        <taxon>Xenopus</taxon>
        <taxon>Xenopus</taxon>
    </lineage>
</organism>
<name>PP4C_XENLA</name>
<sequence length="307" mass="35123">MTEISDLDRQIEQLRRCELIKESEVKALCAKAREILVEESNVQRVDSPVTVCGDIHGQFYDLKELFRVGGDVPETNYLFMGDFVDRGFYSVETFLLLLALKVRYPDRITLIRGNHESRQITQVYGFYDECLRKYGSVTVWRYCTEIFDYLSLSAIIDGKIFCVHGGLSPSIQTLDQIRTIDRKQEVPHDGPMCDLLWSDPEDTTGWGVSPRGAGYLFGSDVVAQFNAANNIDMICRAHQLVMEGYKWHFNETVLTVWSAPNYCYRCGNVAAILELDEHLQKEFIIFEAAPQETRGIPSKKPVADYFL</sequence>
<protein>
    <recommendedName>
        <fullName>Serine/threonine-protein phosphatase 4 catalytic subunit</fullName>
        <shortName>PP4C</shortName>
        <shortName>Pp4</shortName>
        <ecNumber>3.1.3.16</ecNumber>
    </recommendedName>
</protein>
<proteinExistence type="evidence at transcript level"/>
<feature type="chain" id="PRO_0000291880" description="Serine/threonine-protein phosphatase 4 catalytic subunit">
    <location>
        <begin position="1"/>
        <end position="307"/>
    </location>
</feature>
<feature type="active site" description="Proton donor" evidence="1">
    <location>
        <position position="115"/>
    </location>
</feature>
<feature type="binding site" evidence="1">
    <location>
        <position position="54"/>
    </location>
    <ligand>
        <name>Mn(2+)</name>
        <dbReference type="ChEBI" id="CHEBI:29035"/>
        <label>1</label>
    </ligand>
</feature>
<feature type="binding site" evidence="1">
    <location>
        <position position="56"/>
    </location>
    <ligand>
        <name>Mn(2+)</name>
        <dbReference type="ChEBI" id="CHEBI:29035"/>
        <label>1</label>
    </ligand>
</feature>
<feature type="binding site" evidence="1">
    <location>
        <position position="82"/>
    </location>
    <ligand>
        <name>Mn(2+)</name>
        <dbReference type="ChEBI" id="CHEBI:29035"/>
        <label>1</label>
    </ligand>
</feature>
<feature type="binding site" evidence="1">
    <location>
        <position position="82"/>
    </location>
    <ligand>
        <name>Mn(2+)</name>
        <dbReference type="ChEBI" id="CHEBI:29035"/>
        <label>2</label>
    </ligand>
</feature>
<feature type="binding site" evidence="1">
    <location>
        <position position="114"/>
    </location>
    <ligand>
        <name>Mn(2+)</name>
        <dbReference type="ChEBI" id="CHEBI:29035"/>
        <label>2</label>
    </ligand>
</feature>
<feature type="binding site" evidence="1">
    <location>
        <position position="164"/>
    </location>
    <ligand>
        <name>Mn(2+)</name>
        <dbReference type="ChEBI" id="CHEBI:29035"/>
        <label>2</label>
    </ligand>
</feature>
<feature type="binding site" evidence="1">
    <location>
        <position position="238"/>
    </location>
    <ligand>
        <name>Mn(2+)</name>
        <dbReference type="ChEBI" id="CHEBI:29035"/>
        <label>2</label>
    </ligand>
</feature>
<feature type="modified residue" description="Leucine methyl ester" evidence="1">
    <location>
        <position position="307"/>
    </location>
</feature>